<feature type="chain" id="PRO_0000052333" description="Sodium/glutamate symporter">
    <location>
        <begin position="1"/>
        <end position="401"/>
    </location>
</feature>
<feature type="transmembrane region" description="Helical" evidence="1">
    <location>
        <begin position="70"/>
        <end position="90"/>
    </location>
</feature>
<feature type="transmembrane region" description="Helical" evidence="1">
    <location>
        <begin position="93"/>
        <end position="113"/>
    </location>
</feature>
<feature type="transmembrane region" description="Helical" evidence="1">
    <location>
        <begin position="160"/>
        <end position="180"/>
    </location>
</feature>
<feature type="transmembrane region" description="Helical" evidence="1">
    <location>
        <begin position="211"/>
        <end position="231"/>
    </location>
</feature>
<feature type="transmembrane region" description="Helical" evidence="1">
    <location>
        <begin position="248"/>
        <end position="268"/>
    </location>
</feature>
<feature type="transmembrane region" description="Helical" evidence="1">
    <location>
        <begin position="274"/>
        <end position="294"/>
    </location>
</feature>
<feature type="transmembrane region" description="Helical" evidence="1">
    <location>
        <begin position="304"/>
        <end position="324"/>
    </location>
</feature>
<feature type="transmembrane region" description="Helical" evidence="1">
    <location>
        <begin position="335"/>
        <end position="355"/>
    </location>
</feature>
<feature type="transmembrane region" description="Helical" evidence="1">
    <location>
        <begin position="370"/>
        <end position="390"/>
    </location>
</feature>
<keyword id="KW-0029">Amino-acid transport</keyword>
<keyword id="KW-0997">Cell inner membrane</keyword>
<keyword id="KW-1003">Cell membrane</keyword>
<keyword id="KW-0406">Ion transport</keyword>
<keyword id="KW-0472">Membrane</keyword>
<keyword id="KW-1185">Reference proteome</keyword>
<keyword id="KW-0915">Sodium</keyword>
<keyword id="KW-0739">Sodium transport</keyword>
<keyword id="KW-0769">Symport</keyword>
<keyword id="KW-0812">Transmembrane</keyword>
<keyword id="KW-1133">Transmembrane helix</keyword>
<keyword id="KW-0813">Transport</keyword>
<reference key="1">
    <citation type="journal article" date="2002" name="Nucleic Acids Res.">
        <title>Genome sequence of Shigella flexneri 2a: insights into pathogenicity through comparison with genomes of Escherichia coli K12 and O157.</title>
        <authorList>
            <person name="Jin Q."/>
            <person name="Yuan Z."/>
            <person name="Xu J."/>
            <person name="Wang Y."/>
            <person name="Shen Y."/>
            <person name="Lu W."/>
            <person name="Wang J."/>
            <person name="Liu H."/>
            <person name="Yang J."/>
            <person name="Yang F."/>
            <person name="Zhang X."/>
            <person name="Zhang J."/>
            <person name="Yang G."/>
            <person name="Wu H."/>
            <person name="Qu D."/>
            <person name="Dong J."/>
            <person name="Sun L."/>
            <person name="Xue Y."/>
            <person name="Zhao A."/>
            <person name="Gao Y."/>
            <person name="Zhu J."/>
            <person name="Kan B."/>
            <person name="Ding K."/>
            <person name="Chen S."/>
            <person name="Cheng H."/>
            <person name="Yao Z."/>
            <person name="He B."/>
            <person name="Chen R."/>
            <person name="Ma D."/>
            <person name="Qiang B."/>
            <person name="Wen Y."/>
            <person name="Hou Y."/>
            <person name="Yu J."/>
        </authorList>
    </citation>
    <scope>NUCLEOTIDE SEQUENCE [LARGE SCALE GENOMIC DNA]</scope>
    <source>
        <strain>301 / Serotype 2a</strain>
    </source>
</reference>
<reference key="2">
    <citation type="journal article" date="2003" name="Infect. Immun.">
        <title>Complete genome sequence and comparative genomics of Shigella flexneri serotype 2a strain 2457T.</title>
        <authorList>
            <person name="Wei J."/>
            <person name="Goldberg M.B."/>
            <person name="Burland V."/>
            <person name="Venkatesan M.M."/>
            <person name="Deng W."/>
            <person name="Fournier G."/>
            <person name="Mayhew G.F."/>
            <person name="Plunkett G. III"/>
            <person name="Rose D.J."/>
            <person name="Darling A."/>
            <person name="Mau B."/>
            <person name="Perna N.T."/>
            <person name="Payne S.M."/>
            <person name="Runyen-Janecky L.J."/>
            <person name="Zhou S."/>
            <person name="Schwartz D.C."/>
            <person name="Blattner F.R."/>
        </authorList>
    </citation>
    <scope>NUCLEOTIDE SEQUENCE [LARGE SCALE GENOMIC DNA]</scope>
    <source>
        <strain>ATCC 700930 / 2457T / Serotype 2a</strain>
    </source>
</reference>
<gene>
    <name evidence="1" type="primary">gltS</name>
    <name type="ordered locus">SF3693</name>
    <name type="ordered locus">S4076</name>
</gene>
<proteinExistence type="inferred from homology"/>
<dbReference type="EMBL" id="AE005674">
    <property type="protein sequence ID" value="AAN45140.1"/>
    <property type="molecule type" value="Genomic_DNA"/>
</dbReference>
<dbReference type="EMBL" id="AE014073">
    <property type="protein sequence ID" value="AAP19053.1"/>
    <property type="molecule type" value="Genomic_DNA"/>
</dbReference>
<dbReference type="RefSeq" id="NP_709433.1">
    <property type="nucleotide sequence ID" value="NC_004337.2"/>
</dbReference>
<dbReference type="RefSeq" id="WP_000468833.1">
    <property type="nucleotide sequence ID" value="NZ_WPGW01000042.1"/>
</dbReference>
<dbReference type="STRING" id="198214.SF3693"/>
<dbReference type="PaxDb" id="198214-SF3693"/>
<dbReference type="GeneID" id="1026189"/>
<dbReference type="GeneID" id="93778368"/>
<dbReference type="KEGG" id="sfl:SF3693"/>
<dbReference type="KEGG" id="sfx:S4076"/>
<dbReference type="PATRIC" id="fig|198214.7.peg.4357"/>
<dbReference type="HOGENOM" id="CLU_040907_0_0_6"/>
<dbReference type="Proteomes" id="UP000001006">
    <property type="component" value="Chromosome"/>
</dbReference>
<dbReference type="Proteomes" id="UP000002673">
    <property type="component" value="Chromosome"/>
</dbReference>
<dbReference type="GO" id="GO:0005886">
    <property type="term" value="C:plasma membrane"/>
    <property type="evidence" value="ECO:0007669"/>
    <property type="project" value="UniProtKB-SubCell"/>
</dbReference>
<dbReference type="GO" id="GO:0015501">
    <property type="term" value="F:glutamate:sodium symporter activity"/>
    <property type="evidence" value="ECO:0007669"/>
    <property type="project" value="UniProtKB-UniRule"/>
</dbReference>
<dbReference type="GO" id="GO:0015813">
    <property type="term" value="P:L-glutamate transmembrane transport"/>
    <property type="evidence" value="ECO:0007669"/>
    <property type="project" value="InterPro"/>
</dbReference>
<dbReference type="HAMAP" id="MF_02062">
    <property type="entry name" value="GltS"/>
    <property type="match status" value="1"/>
</dbReference>
<dbReference type="InterPro" id="IPR004445">
    <property type="entry name" value="GltS"/>
</dbReference>
<dbReference type="NCBIfam" id="TIGR00210">
    <property type="entry name" value="gltS"/>
    <property type="match status" value="1"/>
</dbReference>
<dbReference type="PANTHER" id="PTHR36178">
    <property type="entry name" value="SLR0625 PROTEIN"/>
    <property type="match status" value="1"/>
</dbReference>
<dbReference type="PANTHER" id="PTHR36178:SF1">
    <property type="entry name" value="SODIUM_GLUTAMATE SYMPORTER"/>
    <property type="match status" value="1"/>
</dbReference>
<dbReference type="Pfam" id="PF03616">
    <property type="entry name" value="Glt_symporter"/>
    <property type="match status" value="1"/>
</dbReference>
<sequence>MFHLDTLATLVAATLTLLLGRKLVHSVSFLKKYTIPEPVAGGLLVALALLVLKKSMGWEVNFDMSLRDPLMLAFFATIGLNANIASLRAGGRVVGIFLIVVVGLLVMQNAIGIGMASLLGLDPLMGLLAGSITLSGGHGTGAAWSKLFIERYGFTNATEVAMACATFGLVLGGLIGGPVARYLVKHSTTPNGIPDDQEVPTAFEKPDVGRMITSLVLIETIALIAICLTVGKIVAQLLAGTAFELPTFVCVLFVGVILSNGLSIMGFYRVFERAVSVLGNVSLSLFLAMALMGLKLWELASLALPMLAILVVQTIFMALYAIFVTWRMMGKNYDAAVLAAGHCGFGLGATPTAIANMQAITERFGPSHMAFLVVPMVGAFFIDIVNALVIKLYLMLPIFAG</sequence>
<organism>
    <name type="scientific">Shigella flexneri</name>
    <dbReference type="NCBI Taxonomy" id="623"/>
    <lineage>
        <taxon>Bacteria</taxon>
        <taxon>Pseudomonadati</taxon>
        <taxon>Pseudomonadota</taxon>
        <taxon>Gammaproteobacteria</taxon>
        <taxon>Enterobacterales</taxon>
        <taxon>Enterobacteriaceae</taxon>
        <taxon>Shigella</taxon>
    </lineage>
</organism>
<name>GLTS_SHIFL</name>
<evidence type="ECO:0000255" key="1">
    <source>
        <dbReference type="HAMAP-Rule" id="MF_02062"/>
    </source>
</evidence>
<comment type="function">
    <text evidence="1">Catalyzes the sodium-dependent transport of glutamate.</text>
</comment>
<comment type="subcellular location">
    <subcellularLocation>
        <location evidence="1">Cell inner membrane</location>
        <topology evidence="1">Multi-pass membrane protein</topology>
    </subcellularLocation>
</comment>
<comment type="similarity">
    <text evidence="1">Belongs to the glutamate:Na(+) symporter (ESS) (TC 2.A.27) family.</text>
</comment>
<accession>P0AER9</accession>
<accession>P19933</accession>
<protein>
    <recommendedName>
        <fullName evidence="1">Sodium/glutamate symporter</fullName>
    </recommendedName>
</protein>